<accession>Q48PN3</accession>
<comment type="function">
    <text evidence="1">Part of the ABC transporter complex MetNIQ involved in methionine import. Responsible for energy coupling to the transport system.</text>
</comment>
<comment type="catalytic activity">
    <reaction evidence="1">
        <text>L-methionine(out) + ATP + H2O = L-methionine(in) + ADP + phosphate + H(+)</text>
        <dbReference type="Rhea" id="RHEA:29779"/>
        <dbReference type="ChEBI" id="CHEBI:15377"/>
        <dbReference type="ChEBI" id="CHEBI:15378"/>
        <dbReference type="ChEBI" id="CHEBI:30616"/>
        <dbReference type="ChEBI" id="CHEBI:43474"/>
        <dbReference type="ChEBI" id="CHEBI:57844"/>
        <dbReference type="ChEBI" id="CHEBI:456216"/>
        <dbReference type="EC" id="7.4.2.11"/>
    </reaction>
</comment>
<comment type="catalytic activity">
    <reaction evidence="1">
        <text>D-methionine(out) + ATP + H2O = D-methionine(in) + ADP + phosphate + H(+)</text>
        <dbReference type="Rhea" id="RHEA:29767"/>
        <dbReference type="ChEBI" id="CHEBI:15377"/>
        <dbReference type="ChEBI" id="CHEBI:15378"/>
        <dbReference type="ChEBI" id="CHEBI:30616"/>
        <dbReference type="ChEBI" id="CHEBI:43474"/>
        <dbReference type="ChEBI" id="CHEBI:57932"/>
        <dbReference type="ChEBI" id="CHEBI:456216"/>
        <dbReference type="EC" id="7.4.2.11"/>
    </reaction>
</comment>
<comment type="subunit">
    <text evidence="1">The complex is composed of two ATP-binding proteins (MetN), two transmembrane proteins (MetI) and a solute-binding protein (MetQ).</text>
</comment>
<comment type="subcellular location">
    <subcellularLocation>
        <location evidence="1">Cell inner membrane</location>
        <topology evidence="1">Peripheral membrane protein</topology>
    </subcellularLocation>
</comment>
<comment type="similarity">
    <text evidence="1">Belongs to the ABC transporter superfamily. Methionine importer (TC 3.A.1.24) family.</text>
</comment>
<reference key="1">
    <citation type="journal article" date="2005" name="J. Bacteriol.">
        <title>Whole-genome sequence analysis of Pseudomonas syringae pv. phaseolicola 1448A reveals divergence among pathovars in genes involved in virulence and transposition.</title>
        <authorList>
            <person name="Joardar V."/>
            <person name="Lindeberg M."/>
            <person name="Jackson R.W."/>
            <person name="Selengut J."/>
            <person name="Dodson R."/>
            <person name="Brinkac L.M."/>
            <person name="Daugherty S.C."/>
            <person name="DeBoy R.T."/>
            <person name="Durkin A.S."/>
            <person name="Gwinn Giglio M."/>
            <person name="Madupu R."/>
            <person name="Nelson W.C."/>
            <person name="Rosovitz M.J."/>
            <person name="Sullivan S.A."/>
            <person name="Crabtree J."/>
            <person name="Creasy T."/>
            <person name="Davidsen T.M."/>
            <person name="Haft D.H."/>
            <person name="Zafar N."/>
            <person name="Zhou L."/>
            <person name="Halpin R."/>
            <person name="Holley T."/>
            <person name="Khouri H.M."/>
            <person name="Feldblyum T.V."/>
            <person name="White O."/>
            <person name="Fraser C.M."/>
            <person name="Chatterjee A.K."/>
            <person name="Cartinhour S."/>
            <person name="Schneider D."/>
            <person name="Mansfield J.W."/>
            <person name="Collmer A."/>
            <person name="Buell R."/>
        </authorList>
    </citation>
    <scope>NUCLEOTIDE SEQUENCE [LARGE SCALE GENOMIC DNA]</scope>
    <source>
        <strain>1448A / Race 6</strain>
    </source>
</reference>
<name>METN2_PSE14</name>
<dbReference type="EC" id="7.4.2.11" evidence="1"/>
<dbReference type="EMBL" id="CP000058">
    <property type="protein sequence ID" value="AAZ34871.1"/>
    <property type="molecule type" value="Genomic_DNA"/>
</dbReference>
<dbReference type="RefSeq" id="WP_004654146.1">
    <property type="nucleotide sequence ID" value="NC_005773.3"/>
</dbReference>
<dbReference type="SMR" id="Q48PN3"/>
<dbReference type="KEGG" id="psp:PSPPH_0333"/>
<dbReference type="eggNOG" id="COG1135">
    <property type="taxonomic scope" value="Bacteria"/>
</dbReference>
<dbReference type="HOGENOM" id="CLU_000604_1_3_6"/>
<dbReference type="Proteomes" id="UP000000551">
    <property type="component" value="Chromosome"/>
</dbReference>
<dbReference type="GO" id="GO:0005886">
    <property type="term" value="C:plasma membrane"/>
    <property type="evidence" value="ECO:0007669"/>
    <property type="project" value="UniProtKB-SubCell"/>
</dbReference>
<dbReference type="GO" id="GO:0033232">
    <property type="term" value="F:ABC-type D-methionine transporter activity"/>
    <property type="evidence" value="ECO:0007669"/>
    <property type="project" value="UniProtKB-EC"/>
</dbReference>
<dbReference type="GO" id="GO:0005524">
    <property type="term" value="F:ATP binding"/>
    <property type="evidence" value="ECO:0007669"/>
    <property type="project" value="UniProtKB-KW"/>
</dbReference>
<dbReference type="GO" id="GO:0016887">
    <property type="term" value="F:ATP hydrolysis activity"/>
    <property type="evidence" value="ECO:0007669"/>
    <property type="project" value="InterPro"/>
</dbReference>
<dbReference type="CDD" id="cd03258">
    <property type="entry name" value="ABC_MetN_methionine_transporter"/>
    <property type="match status" value="1"/>
</dbReference>
<dbReference type="FunFam" id="3.40.50.300:FF:001755">
    <property type="entry name" value="Methionine import ATP-binding protein MetN"/>
    <property type="match status" value="1"/>
</dbReference>
<dbReference type="Gene3D" id="3.30.70.260">
    <property type="match status" value="1"/>
</dbReference>
<dbReference type="Gene3D" id="3.40.50.300">
    <property type="entry name" value="P-loop containing nucleotide triphosphate hydrolases"/>
    <property type="match status" value="1"/>
</dbReference>
<dbReference type="InterPro" id="IPR003593">
    <property type="entry name" value="AAA+_ATPase"/>
</dbReference>
<dbReference type="InterPro" id="IPR003439">
    <property type="entry name" value="ABC_transporter-like_ATP-bd"/>
</dbReference>
<dbReference type="InterPro" id="IPR017871">
    <property type="entry name" value="ABC_transporter-like_CS"/>
</dbReference>
<dbReference type="InterPro" id="IPR045865">
    <property type="entry name" value="ACT-like_dom_sf"/>
</dbReference>
<dbReference type="InterPro" id="IPR041701">
    <property type="entry name" value="MetN_ABC"/>
</dbReference>
<dbReference type="InterPro" id="IPR050086">
    <property type="entry name" value="MetN_ABC_transporter-like"/>
</dbReference>
<dbReference type="InterPro" id="IPR018449">
    <property type="entry name" value="NIL_domain"/>
</dbReference>
<dbReference type="InterPro" id="IPR027417">
    <property type="entry name" value="P-loop_NTPase"/>
</dbReference>
<dbReference type="PANTHER" id="PTHR43166">
    <property type="entry name" value="AMINO ACID IMPORT ATP-BINDING PROTEIN"/>
    <property type="match status" value="1"/>
</dbReference>
<dbReference type="PANTHER" id="PTHR43166:SF30">
    <property type="entry name" value="METHIONINE IMPORT ATP-BINDING PROTEIN METN"/>
    <property type="match status" value="1"/>
</dbReference>
<dbReference type="Pfam" id="PF00005">
    <property type="entry name" value="ABC_tran"/>
    <property type="match status" value="1"/>
</dbReference>
<dbReference type="Pfam" id="PF09383">
    <property type="entry name" value="NIL"/>
    <property type="match status" value="1"/>
</dbReference>
<dbReference type="SMART" id="SM00382">
    <property type="entry name" value="AAA"/>
    <property type="match status" value="1"/>
</dbReference>
<dbReference type="SMART" id="SM00930">
    <property type="entry name" value="NIL"/>
    <property type="match status" value="1"/>
</dbReference>
<dbReference type="SUPFAM" id="SSF55021">
    <property type="entry name" value="ACT-like"/>
    <property type="match status" value="1"/>
</dbReference>
<dbReference type="SUPFAM" id="SSF52540">
    <property type="entry name" value="P-loop containing nucleoside triphosphate hydrolases"/>
    <property type="match status" value="1"/>
</dbReference>
<dbReference type="PROSITE" id="PS00211">
    <property type="entry name" value="ABC_TRANSPORTER_1"/>
    <property type="match status" value="1"/>
</dbReference>
<dbReference type="PROSITE" id="PS50893">
    <property type="entry name" value="ABC_TRANSPORTER_2"/>
    <property type="match status" value="1"/>
</dbReference>
<dbReference type="PROSITE" id="PS51264">
    <property type="entry name" value="METN"/>
    <property type="match status" value="1"/>
</dbReference>
<feature type="chain" id="PRO_0000270355" description="Methionine import ATP-binding protein MetN 2">
    <location>
        <begin position="1"/>
        <end position="376"/>
    </location>
</feature>
<feature type="domain" description="ABC transporter" evidence="1">
    <location>
        <begin position="34"/>
        <end position="273"/>
    </location>
</feature>
<feature type="binding site" evidence="1">
    <location>
        <begin position="70"/>
        <end position="77"/>
    </location>
    <ligand>
        <name>ATP</name>
        <dbReference type="ChEBI" id="CHEBI:30616"/>
    </ligand>
</feature>
<gene>
    <name evidence="1" type="primary">metN2</name>
    <name type="ordered locus">PSPPH_0333</name>
</gene>
<evidence type="ECO:0000255" key="1">
    <source>
        <dbReference type="HAMAP-Rule" id="MF_01719"/>
    </source>
</evidence>
<protein>
    <recommendedName>
        <fullName evidence="1">Methionine import ATP-binding protein MetN 2</fullName>
        <ecNumber evidence="1">7.4.2.11</ecNumber>
    </recommendedName>
</protein>
<sequence>MTATAQRQLPLDTPSASTLAQQAELHPELNRAHVRFINLGKTYHGKQGPVEALGNIDLAVQRGEIFGIIGRSGAGKSSLIRTINRLEQPSSGRVLIDQVDIGEFDEDKLVELRRRIGMIFQHFNLMSAKTVWQNVELPLKVAGVPREQRARKVAQLLELVGLQDKHNAYPAQLSGGQKQRVGIARALVHDPAILLCDEATSALDPETTQSILGLLREINQRLGLTIVLITHEMAVIRDICHRVVVLEQGRIVEQGPVWQVFGDPQHDVSKTLLAPLQTGLPKEWAERLSDQPQRPDAALLLDVHFTGASDQGPDLAALFAALGGKVQLLQGGVERIQERAIGHLILSVAGSVHTRDELLARARQLAPRAEVLGYVG</sequence>
<proteinExistence type="inferred from homology"/>
<organism>
    <name type="scientific">Pseudomonas savastanoi pv. phaseolicola (strain 1448A / Race 6)</name>
    <name type="common">Pseudomonas syringae pv. phaseolicola (strain 1448A / Race 6)</name>
    <dbReference type="NCBI Taxonomy" id="264730"/>
    <lineage>
        <taxon>Bacteria</taxon>
        <taxon>Pseudomonadati</taxon>
        <taxon>Pseudomonadota</taxon>
        <taxon>Gammaproteobacteria</taxon>
        <taxon>Pseudomonadales</taxon>
        <taxon>Pseudomonadaceae</taxon>
        <taxon>Pseudomonas</taxon>
    </lineage>
</organism>
<keyword id="KW-0029">Amino-acid transport</keyword>
<keyword id="KW-0067">ATP-binding</keyword>
<keyword id="KW-0997">Cell inner membrane</keyword>
<keyword id="KW-1003">Cell membrane</keyword>
<keyword id="KW-0472">Membrane</keyword>
<keyword id="KW-0547">Nucleotide-binding</keyword>
<keyword id="KW-1278">Translocase</keyword>
<keyword id="KW-0813">Transport</keyword>